<comment type="function">
    <text evidence="1">Part of a membrane-bound complex that couples electron transfer with translocation of ions across the membrane.</text>
</comment>
<comment type="subunit">
    <text evidence="1">The complex is composed of six subunits: RnfA, RnfB, RnfC, RnfD, RnfE and RnfG.</text>
</comment>
<comment type="subcellular location">
    <subcellularLocation>
        <location evidence="1">Cell inner membrane</location>
        <topology evidence="1">Multi-pass membrane protein</topology>
    </subcellularLocation>
</comment>
<comment type="similarity">
    <text evidence="1">Belongs to the NqrDE/RnfAE family.</text>
</comment>
<proteinExistence type="inferred from homology"/>
<gene>
    <name evidence="1" type="primary">rnfE</name>
    <name type="ordered locus">YPK_2012</name>
</gene>
<sequence>MSEAKKLLAQGLWKNNSALVQLLGLCPLLAVSSTATNALGLGLATTLVLVCTNTAVSALRRWVPSEIRIPIYVMIIASVVSTVQMLINAYAFGLYQSLGIFIPLIVTNCIVIGRAEAYAAKNPVGLSALDGFAMGMGATCALFVLGALREILGNGTLFDGADMLLGSWATVLRIDILHLDTPFLLAMLPPGAFIGLGLLLAGKYVIDEKMKARKANTRVSVPQLQDGDAEKAL</sequence>
<protein>
    <recommendedName>
        <fullName evidence="1">Ion-translocating oxidoreductase complex subunit E</fullName>
        <ecNumber evidence="1">7.-.-.-</ecNumber>
    </recommendedName>
    <alternativeName>
        <fullName evidence="1">Rnf electron transport complex subunit E</fullName>
    </alternativeName>
</protein>
<reference key="1">
    <citation type="submission" date="2008-02" db="EMBL/GenBank/DDBJ databases">
        <title>Complete sequence of Yersinia pseudotuberculosis YPIII.</title>
        <authorList>
            <consortium name="US DOE Joint Genome Institute"/>
            <person name="Copeland A."/>
            <person name="Lucas S."/>
            <person name="Lapidus A."/>
            <person name="Glavina del Rio T."/>
            <person name="Dalin E."/>
            <person name="Tice H."/>
            <person name="Bruce D."/>
            <person name="Goodwin L."/>
            <person name="Pitluck S."/>
            <person name="Munk A.C."/>
            <person name="Brettin T."/>
            <person name="Detter J.C."/>
            <person name="Han C."/>
            <person name="Tapia R."/>
            <person name="Schmutz J."/>
            <person name="Larimer F."/>
            <person name="Land M."/>
            <person name="Hauser L."/>
            <person name="Challacombe J.F."/>
            <person name="Green L."/>
            <person name="Lindler L.E."/>
            <person name="Nikolich M.P."/>
            <person name="Richardson P."/>
        </authorList>
    </citation>
    <scope>NUCLEOTIDE SEQUENCE [LARGE SCALE GENOMIC DNA]</scope>
    <source>
        <strain>YPIII</strain>
    </source>
</reference>
<organism>
    <name type="scientific">Yersinia pseudotuberculosis serotype O:3 (strain YPIII)</name>
    <dbReference type="NCBI Taxonomy" id="502800"/>
    <lineage>
        <taxon>Bacteria</taxon>
        <taxon>Pseudomonadati</taxon>
        <taxon>Pseudomonadota</taxon>
        <taxon>Gammaproteobacteria</taxon>
        <taxon>Enterobacterales</taxon>
        <taxon>Yersiniaceae</taxon>
        <taxon>Yersinia</taxon>
    </lineage>
</organism>
<feature type="chain" id="PRO_1000125871" description="Ion-translocating oxidoreductase complex subunit E">
    <location>
        <begin position="1"/>
        <end position="233"/>
    </location>
</feature>
<feature type="transmembrane region" description="Helical" evidence="1">
    <location>
        <begin position="18"/>
        <end position="38"/>
    </location>
</feature>
<feature type="transmembrane region" description="Helical" evidence="1">
    <location>
        <begin position="39"/>
        <end position="59"/>
    </location>
</feature>
<feature type="transmembrane region" description="Helical" evidence="1">
    <location>
        <begin position="69"/>
        <end position="89"/>
    </location>
</feature>
<feature type="transmembrane region" description="Helical" evidence="1">
    <location>
        <begin position="92"/>
        <end position="112"/>
    </location>
</feature>
<feature type="transmembrane region" description="Helical" evidence="1">
    <location>
        <begin position="128"/>
        <end position="148"/>
    </location>
</feature>
<feature type="transmembrane region" description="Helical" evidence="1">
    <location>
        <begin position="182"/>
        <end position="202"/>
    </location>
</feature>
<dbReference type="EC" id="7.-.-.-" evidence="1"/>
<dbReference type="EMBL" id="CP000950">
    <property type="protein sequence ID" value="ACA68299.1"/>
    <property type="molecule type" value="Genomic_DNA"/>
</dbReference>
<dbReference type="RefSeq" id="WP_012304077.1">
    <property type="nucleotide sequence ID" value="NZ_CP009792.1"/>
</dbReference>
<dbReference type="SMR" id="B1JKN8"/>
<dbReference type="KEGG" id="ypy:YPK_2012"/>
<dbReference type="PATRIC" id="fig|502800.11.peg.2689"/>
<dbReference type="GO" id="GO:0005886">
    <property type="term" value="C:plasma membrane"/>
    <property type="evidence" value="ECO:0007669"/>
    <property type="project" value="UniProtKB-SubCell"/>
</dbReference>
<dbReference type="GO" id="GO:0022900">
    <property type="term" value="P:electron transport chain"/>
    <property type="evidence" value="ECO:0007669"/>
    <property type="project" value="UniProtKB-UniRule"/>
</dbReference>
<dbReference type="HAMAP" id="MF_00478">
    <property type="entry name" value="RsxE_RnfE"/>
    <property type="match status" value="1"/>
</dbReference>
<dbReference type="InterPro" id="IPR003667">
    <property type="entry name" value="NqrDE/RnfAE"/>
</dbReference>
<dbReference type="InterPro" id="IPR010968">
    <property type="entry name" value="RnfE"/>
</dbReference>
<dbReference type="NCBIfam" id="NF009070">
    <property type="entry name" value="PRK12405.1"/>
    <property type="match status" value="1"/>
</dbReference>
<dbReference type="NCBIfam" id="TIGR01948">
    <property type="entry name" value="rnfE"/>
    <property type="match status" value="1"/>
</dbReference>
<dbReference type="PANTHER" id="PTHR30586">
    <property type="entry name" value="ELECTRON TRANSPORT COMPLEX PROTEIN RNFE"/>
    <property type="match status" value="1"/>
</dbReference>
<dbReference type="PANTHER" id="PTHR30586:SF0">
    <property type="entry name" value="ION-TRANSLOCATING OXIDOREDUCTASE COMPLEX SUBUNIT E"/>
    <property type="match status" value="1"/>
</dbReference>
<dbReference type="Pfam" id="PF02508">
    <property type="entry name" value="Rnf-Nqr"/>
    <property type="match status" value="1"/>
</dbReference>
<dbReference type="PIRSF" id="PIRSF006102">
    <property type="entry name" value="NQR_DE"/>
    <property type="match status" value="1"/>
</dbReference>
<name>RNFE_YERPY</name>
<accession>B1JKN8</accession>
<evidence type="ECO:0000255" key="1">
    <source>
        <dbReference type="HAMAP-Rule" id="MF_00478"/>
    </source>
</evidence>
<keyword id="KW-0997">Cell inner membrane</keyword>
<keyword id="KW-1003">Cell membrane</keyword>
<keyword id="KW-0249">Electron transport</keyword>
<keyword id="KW-0472">Membrane</keyword>
<keyword id="KW-1278">Translocase</keyword>
<keyword id="KW-0812">Transmembrane</keyword>
<keyword id="KW-1133">Transmembrane helix</keyword>
<keyword id="KW-0813">Transport</keyword>